<sequence length="509" mass="54624">MDIRAAEISAILKDQIKNFGNEAEVSEVGQVLSVGDGIARVYGLDNVQAGEMVEFPGGIRGMALNLEADNVGVVIFGSDRSIKEGDTVKRTGAIVDVPVGPELLGRVVDALGNPIDGKGPINAAKRSRVDVKAPGIIPRKSVHEPMSTGLKAIDALIPVGRGQRELVIGDRQTGKTAIILDTILNQKAIHDNGPDGDKLYCVYVAIGQKRSTVAQFVKVLEERGALQYSIIVAATASDPAPMQYLAPFAGCAMGEYFRDNGKHALIGYDDLSKQAVAYRQMSLLLRRPPGREAYPGDVFYLHSRLLERAAKLSDEMGAGSLTALPVIETQGNDVSAFIPTNVISITDGQIFLETDLFYQGIRPAVNVGLSVSRVGSAAQIKAMKQVAGSIKGELAQYREMAAFAQFGSDLDASTQRLLNRGARLTELLKQPQFSPLKTEEQVAVIFAGVNGYLDKIPVAQVGKFEQGFLSYLRSEGKAILDTIRTEKAISDDTKGKLKGALDNFAKSFS</sequence>
<accession>Q8UC74</accession>
<accession>Q7CWL9</accession>
<reference key="1">
    <citation type="journal article" date="2001" name="Science">
        <title>The genome of the natural genetic engineer Agrobacterium tumefaciens C58.</title>
        <authorList>
            <person name="Wood D.W."/>
            <person name="Setubal J.C."/>
            <person name="Kaul R."/>
            <person name="Monks D.E."/>
            <person name="Kitajima J.P."/>
            <person name="Okura V.K."/>
            <person name="Zhou Y."/>
            <person name="Chen L."/>
            <person name="Wood G.E."/>
            <person name="Almeida N.F. Jr."/>
            <person name="Woo L."/>
            <person name="Chen Y."/>
            <person name="Paulsen I.T."/>
            <person name="Eisen J.A."/>
            <person name="Karp P.D."/>
            <person name="Bovee D. Sr."/>
            <person name="Chapman P."/>
            <person name="Clendenning J."/>
            <person name="Deatherage G."/>
            <person name="Gillet W."/>
            <person name="Grant C."/>
            <person name="Kutyavin T."/>
            <person name="Levy R."/>
            <person name="Li M.-J."/>
            <person name="McClelland E."/>
            <person name="Palmieri A."/>
            <person name="Raymond C."/>
            <person name="Rouse G."/>
            <person name="Saenphimmachak C."/>
            <person name="Wu Z."/>
            <person name="Romero P."/>
            <person name="Gordon D."/>
            <person name="Zhang S."/>
            <person name="Yoo H."/>
            <person name="Tao Y."/>
            <person name="Biddle P."/>
            <person name="Jung M."/>
            <person name="Krespan W."/>
            <person name="Perry M."/>
            <person name="Gordon-Kamm B."/>
            <person name="Liao L."/>
            <person name="Kim S."/>
            <person name="Hendrick C."/>
            <person name="Zhao Z.-Y."/>
            <person name="Dolan M."/>
            <person name="Chumley F."/>
            <person name="Tingey S.V."/>
            <person name="Tomb J.-F."/>
            <person name="Gordon M.P."/>
            <person name="Olson M.V."/>
            <person name="Nester E.W."/>
        </authorList>
    </citation>
    <scope>NUCLEOTIDE SEQUENCE [LARGE SCALE GENOMIC DNA]</scope>
    <source>
        <strain>C58 / ATCC 33970</strain>
    </source>
</reference>
<reference key="2">
    <citation type="journal article" date="2001" name="Science">
        <title>Genome sequence of the plant pathogen and biotechnology agent Agrobacterium tumefaciens C58.</title>
        <authorList>
            <person name="Goodner B."/>
            <person name="Hinkle G."/>
            <person name="Gattung S."/>
            <person name="Miller N."/>
            <person name="Blanchard M."/>
            <person name="Qurollo B."/>
            <person name="Goldman B.S."/>
            <person name="Cao Y."/>
            <person name="Askenazi M."/>
            <person name="Halling C."/>
            <person name="Mullin L."/>
            <person name="Houmiel K."/>
            <person name="Gordon J."/>
            <person name="Vaudin M."/>
            <person name="Iartchouk O."/>
            <person name="Epp A."/>
            <person name="Liu F."/>
            <person name="Wollam C."/>
            <person name="Allinger M."/>
            <person name="Doughty D."/>
            <person name="Scott C."/>
            <person name="Lappas C."/>
            <person name="Markelz B."/>
            <person name="Flanagan C."/>
            <person name="Crowell C."/>
            <person name="Gurson J."/>
            <person name="Lomo C."/>
            <person name="Sear C."/>
            <person name="Strub G."/>
            <person name="Cielo C."/>
            <person name="Slater S."/>
        </authorList>
    </citation>
    <scope>NUCLEOTIDE SEQUENCE [LARGE SCALE GENOMIC DNA]</scope>
    <source>
        <strain>C58 / ATCC 33970</strain>
    </source>
</reference>
<protein>
    <recommendedName>
        <fullName evidence="1">ATP synthase subunit alpha</fullName>
        <ecNumber evidence="1">7.1.2.2</ecNumber>
    </recommendedName>
    <alternativeName>
        <fullName evidence="1">ATP synthase F1 sector subunit alpha</fullName>
    </alternativeName>
    <alternativeName>
        <fullName evidence="1">F-ATPase subunit alpha</fullName>
    </alternativeName>
</protein>
<dbReference type="EC" id="7.1.2.2" evidence="1"/>
<dbReference type="EMBL" id="AE007869">
    <property type="protein sequence ID" value="AAK88345.1"/>
    <property type="molecule type" value="Genomic_DNA"/>
</dbReference>
<dbReference type="PIR" id="AG2898">
    <property type="entry name" value="AG2898"/>
</dbReference>
<dbReference type="PIR" id="H97673">
    <property type="entry name" value="H97673"/>
</dbReference>
<dbReference type="RefSeq" id="NP_355560.1">
    <property type="nucleotide sequence ID" value="NC_003062.2"/>
</dbReference>
<dbReference type="RefSeq" id="WP_006310773.1">
    <property type="nucleotide sequence ID" value="NC_003062.2"/>
</dbReference>
<dbReference type="SMR" id="Q8UC74"/>
<dbReference type="STRING" id="176299.Atu2624"/>
<dbReference type="EnsemblBacteria" id="AAK88345">
    <property type="protein sequence ID" value="AAK88345"/>
    <property type="gene ID" value="Atu2624"/>
</dbReference>
<dbReference type="GeneID" id="1134662"/>
<dbReference type="KEGG" id="atu:Atu2624"/>
<dbReference type="PATRIC" id="fig|176299.10.peg.2627"/>
<dbReference type="eggNOG" id="COG0056">
    <property type="taxonomic scope" value="Bacteria"/>
</dbReference>
<dbReference type="HOGENOM" id="CLU_010091_2_1_5"/>
<dbReference type="OrthoDB" id="9803053at2"/>
<dbReference type="PhylomeDB" id="Q8UC74"/>
<dbReference type="BioCyc" id="AGRO:ATU2624-MONOMER"/>
<dbReference type="Proteomes" id="UP000000813">
    <property type="component" value="Chromosome circular"/>
</dbReference>
<dbReference type="GO" id="GO:0005886">
    <property type="term" value="C:plasma membrane"/>
    <property type="evidence" value="ECO:0007669"/>
    <property type="project" value="UniProtKB-SubCell"/>
</dbReference>
<dbReference type="GO" id="GO:0045259">
    <property type="term" value="C:proton-transporting ATP synthase complex"/>
    <property type="evidence" value="ECO:0007669"/>
    <property type="project" value="UniProtKB-KW"/>
</dbReference>
<dbReference type="GO" id="GO:0043531">
    <property type="term" value="F:ADP binding"/>
    <property type="evidence" value="ECO:0007669"/>
    <property type="project" value="TreeGrafter"/>
</dbReference>
<dbReference type="GO" id="GO:0005524">
    <property type="term" value="F:ATP binding"/>
    <property type="evidence" value="ECO:0007669"/>
    <property type="project" value="UniProtKB-UniRule"/>
</dbReference>
<dbReference type="GO" id="GO:0046933">
    <property type="term" value="F:proton-transporting ATP synthase activity, rotational mechanism"/>
    <property type="evidence" value="ECO:0007669"/>
    <property type="project" value="UniProtKB-UniRule"/>
</dbReference>
<dbReference type="CDD" id="cd18113">
    <property type="entry name" value="ATP-synt_F1_alpha_C"/>
    <property type="match status" value="1"/>
</dbReference>
<dbReference type="CDD" id="cd18116">
    <property type="entry name" value="ATP-synt_F1_alpha_N"/>
    <property type="match status" value="1"/>
</dbReference>
<dbReference type="CDD" id="cd01132">
    <property type="entry name" value="F1-ATPase_alpha_CD"/>
    <property type="match status" value="1"/>
</dbReference>
<dbReference type="FunFam" id="1.20.150.20:FF:000001">
    <property type="entry name" value="ATP synthase subunit alpha"/>
    <property type="match status" value="1"/>
</dbReference>
<dbReference type="FunFam" id="2.40.30.20:FF:000001">
    <property type="entry name" value="ATP synthase subunit alpha"/>
    <property type="match status" value="1"/>
</dbReference>
<dbReference type="FunFam" id="3.40.50.300:FF:002432">
    <property type="entry name" value="ATP synthase subunit alpha, mitochondrial"/>
    <property type="match status" value="1"/>
</dbReference>
<dbReference type="Gene3D" id="2.40.30.20">
    <property type="match status" value="1"/>
</dbReference>
<dbReference type="Gene3D" id="1.20.150.20">
    <property type="entry name" value="ATP synthase alpha/beta chain, C-terminal domain"/>
    <property type="match status" value="1"/>
</dbReference>
<dbReference type="Gene3D" id="3.40.50.300">
    <property type="entry name" value="P-loop containing nucleotide triphosphate hydrolases"/>
    <property type="match status" value="1"/>
</dbReference>
<dbReference type="HAMAP" id="MF_01346">
    <property type="entry name" value="ATP_synth_alpha_bact"/>
    <property type="match status" value="1"/>
</dbReference>
<dbReference type="InterPro" id="IPR023366">
    <property type="entry name" value="ATP_synth_asu-like_sf"/>
</dbReference>
<dbReference type="InterPro" id="IPR000793">
    <property type="entry name" value="ATP_synth_asu_C"/>
</dbReference>
<dbReference type="InterPro" id="IPR038376">
    <property type="entry name" value="ATP_synth_asu_C_sf"/>
</dbReference>
<dbReference type="InterPro" id="IPR033732">
    <property type="entry name" value="ATP_synth_F1_a_nt-bd_dom"/>
</dbReference>
<dbReference type="InterPro" id="IPR005294">
    <property type="entry name" value="ATP_synth_F1_asu"/>
</dbReference>
<dbReference type="InterPro" id="IPR020003">
    <property type="entry name" value="ATPase_a/bsu_AS"/>
</dbReference>
<dbReference type="InterPro" id="IPR004100">
    <property type="entry name" value="ATPase_F1/V1/A1_a/bsu_N"/>
</dbReference>
<dbReference type="InterPro" id="IPR036121">
    <property type="entry name" value="ATPase_F1/V1/A1_a/bsu_N_sf"/>
</dbReference>
<dbReference type="InterPro" id="IPR000194">
    <property type="entry name" value="ATPase_F1/V1/A1_a/bsu_nucl-bd"/>
</dbReference>
<dbReference type="InterPro" id="IPR027417">
    <property type="entry name" value="P-loop_NTPase"/>
</dbReference>
<dbReference type="NCBIfam" id="TIGR00962">
    <property type="entry name" value="atpA"/>
    <property type="match status" value="1"/>
</dbReference>
<dbReference type="NCBIfam" id="NF009884">
    <property type="entry name" value="PRK13343.1"/>
    <property type="match status" value="1"/>
</dbReference>
<dbReference type="PANTHER" id="PTHR48082">
    <property type="entry name" value="ATP SYNTHASE SUBUNIT ALPHA, MITOCHONDRIAL"/>
    <property type="match status" value="1"/>
</dbReference>
<dbReference type="PANTHER" id="PTHR48082:SF2">
    <property type="entry name" value="ATP SYNTHASE SUBUNIT ALPHA, MITOCHONDRIAL"/>
    <property type="match status" value="1"/>
</dbReference>
<dbReference type="Pfam" id="PF00006">
    <property type="entry name" value="ATP-synt_ab"/>
    <property type="match status" value="1"/>
</dbReference>
<dbReference type="Pfam" id="PF00306">
    <property type="entry name" value="ATP-synt_ab_C"/>
    <property type="match status" value="1"/>
</dbReference>
<dbReference type="Pfam" id="PF02874">
    <property type="entry name" value="ATP-synt_ab_N"/>
    <property type="match status" value="1"/>
</dbReference>
<dbReference type="PIRSF" id="PIRSF039088">
    <property type="entry name" value="F_ATPase_subunit_alpha"/>
    <property type="match status" value="1"/>
</dbReference>
<dbReference type="SUPFAM" id="SSF47917">
    <property type="entry name" value="C-terminal domain of alpha and beta subunits of F1 ATP synthase"/>
    <property type="match status" value="1"/>
</dbReference>
<dbReference type="SUPFAM" id="SSF50615">
    <property type="entry name" value="N-terminal domain of alpha and beta subunits of F1 ATP synthase"/>
    <property type="match status" value="1"/>
</dbReference>
<dbReference type="SUPFAM" id="SSF52540">
    <property type="entry name" value="P-loop containing nucleoside triphosphate hydrolases"/>
    <property type="match status" value="1"/>
</dbReference>
<dbReference type="PROSITE" id="PS00152">
    <property type="entry name" value="ATPASE_ALPHA_BETA"/>
    <property type="match status" value="1"/>
</dbReference>
<comment type="function">
    <text evidence="1">Produces ATP from ADP in the presence of a proton gradient across the membrane. The alpha chain is a regulatory subunit.</text>
</comment>
<comment type="catalytic activity">
    <reaction evidence="1">
        <text>ATP + H2O + 4 H(+)(in) = ADP + phosphate + 5 H(+)(out)</text>
        <dbReference type="Rhea" id="RHEA:57720"/>
        <dbReference type="ChEBI" id="CHEBI:15377"/>
        <dbReference type="ChEBI" id="CHEBI:15378"/>
        <dbReference type="ChEBI" id="CHEBI:30616"/>
        <dbReference type="ChEBI" id="CHEBI:43474"/>
        <dbReference type="ChEBI" id="CHEBI:456216"/>
        <dbReference type="EC" id="7.1.2.2"/>
    </reaction>
</comment>
<comment type="subunit">
    <text evidence="1">F-type ATPases have 2 components, CF(1) - the catalytic core - and CF(0) - the membrane proton channel. CF(1) has five subunits: alpha(3), beta(3), gamma(1), delta(1), epsilon(1). CF(0) has three main subunits: a(1), b(2) and c(9-12). The alpha and beta chains form an alternating ring which encloses part of the gamma chain. CF(1) is attached to CF(0) by a central stalk formed by the gamma and epsilon chains, while a peripheral stalk is formed by the delta and b chains.</text>
</comment>
<comment type="subcellular location">
    <subcellularLocation>
        <location evidence="1">Cell inner membrane</location>
        <topology evidence="1">Peripheral membrane protein</topology>
    </subcellularLocation>
</comment>
<comment type="similarity">
    <text evidence="1">Belongs to the ATPase alpha/beta chains family.</text>
</comment>
<gene>
    <name evidence="1" type="primary">atpA</name>
    <name type="ordered locus">Atu2624</name>
    <name type="ORF">AGR_C_4757</name>
</gene>
<name>ATPA_AGRFC</name>
<feature type="chain" id="PRO_0000238186" description="ATP synthase subunit alpha">
    <location>
        <begin position="1"/>
        <end position="509"/>
    </location>
</feature>
<feature type="binding site" evidence="1">
    <location>
        <begin position="169"/>
        <end position="176"/>
    </location>
    <ligand>
        <name>ATP</name>
        <dbReference type="ChEBI" id="CHEBI:30616"/>
    </ligand>
</feature>
<feature type="site" description="Required for activity" evidence="1">
    <location>
        <position position="370"/>
    </location>
</feature>
<evidence type="ECO:0000255" key="1">
    <source>
        <dbReference type="HAMAP-Rule" id="MF_01346"/>
    </source>
</evidence>
<proteinExistence type="inferred from homology"/>
<organism>
    <name type="scientific">Agrobacterium fabrum (strain C58 / ATCC 33970)</name>
    <name type="common">Agrobacterium tumefaciens (strain C58)</name>
    <dbReference type="NCBI Taxonomy" id="176299"/>
    <lineage>
        <taxon>Bacteria</taxon>
        <taxon>Pseudomonadati</taxon>
        <taxon>Pseudomonadota</taxon>
        <taxon>Alphaproteobacteria</taxon>
        <taxon>Hyphomicrobiales</taxon>
        <taxon>Rhizobiaceae</taxon>
        <taxon>Rhizobium/Agrobacterium group</taxon>
        <taxon>Agrobacterium</taxon>
        <taxon>Agrobacterium tumefaciens complex</taxon>
    </lineage>
</organism>
<keyword id="KW-0066">ATP synthesis</keyword>
<keyword id="KW-0067">ATP-binding</keyword>
<keyword id="KW-0997">Cell inner membrane</keyword>
<keyword id="KW-1003">Cell membrane</keyword>
<keyword id="KW-0139">CF(1)</keyword>
<keyword id="KW-0375">Hydrogen ion transport</keyword>
<keyword id="KW-0406">Ion transport</keyword>
<keyword id="KW-0472">Membrane</keyword>
<keyword id="KW-0547">Nucleotide-binding</keyword>
<keyword id="KW-1185">Reference proteome</keyword>
<keyword id="KW-1278">Translocase</keyword>
<keyword id="KW-0813">Transport</keyword>